<feature type="chain" id="PRO_1000045736" description="Protein SlyX homolog">
    <location>
        <begin position="1"/>
        <end position="70"/>
    </location>
</feature>
<proteinExistence type="inferred from homology"/>
<protein>
    <recommendedName>
        <fullName evidence="1">Protein SlyX homolog</fullName>
    </recommendedName>
</protein>
<dbReference type="EMBL" id="CP000606">
    <property type="protein sequence ID" value="ABO22710.1"/>
    <property type="molecule type" value="Genomic_DNA"/>
</dbReference>
<dbReference type="RefSeq" id="WP_011864644.1">
    <property type="nucleotide sequence ID" value="NC_009092.1"/>
</dbReference>
<dbReference type="SMR" id="A3QB62"/>
<dbReference type="STRING" id="323850.Shew_0838"/>
<dbReference type="KEGG" id="slo:Shew_0838"/>
<dbReference type="eggNOG" id="COG2900">
    <property type="taxonomic scope" value="Bacteria"/>
</dbReference>
<dbReference type="HOGENOM" id="CLU_180796_4_0_6"/>
<dbReference type="OrthoDB" id="5771733at2"/>
<dbReference type="Proteomes" id="UP000001558">
    <property type="component" value="Chromosome"/>
</dbReference>
<dbReference type="Gene3D" id="1.20.5.300">
    <property type="match status" value="1"/>
</dbReference>
<dbReference type="HAMAP" id="MF_00715">
    <property type="entry name" value="SlyX"/>
    <property type="match status" value="1"/>
</dbReference>
<dbReference type="InterPro" id="IPR007236">
    <property type="entry name" value="SlyX"/>
</dbReference>
<dbReference type="PANTHER" id="PTHR36508">
    <property type="entry name" value="PROTEIN SLYX"/>
    <property type="match status" value="1"/>
</dbReference>
<dbReference type="PANTHER" id="PTHR36508:SF1">
    <property type="entry name" value="PROTEIN SLYX"/>
    <property type="match status" value="1"/>
</dbReference>
<dbReference type="Pfam" id="PF04102">
    <property type="entry name" value="SlyX"/>
    <property type="match status" value="1"/>
</dbReference>
<dbReference type="SUPFAM" id="SSF57997">
    <property type="entry name" value="Tropomyosin"/>
    <property type="match status" value="1"/>
</dbReference>
<gene>
    <name evidence="1" type="primary">slyX</name>
    <name type="ordered locus">Shew_0838</name>
</gene>
<evidence type="ECO:0000255" key="1">
    <source>
        <dbReference type="HAMAP-Rule" id="MF_00715"/>
    </source>
</evidence>
<accession>A3QB62</accession>
<reference key="1">
    <citation type="submission" date="2007-03" db="EMBL/GenBank/DDBJ databases">
        <title>Complete sequence of Shewanella loihica PV-4.</title>
        <authorList>
            <consortium name="US DOE Joint Genome Institute"/>
            <person name="Copeland A."/>
            <person name="Lucas S."/>
            <person name="Lapidus A."/>
            <person name="Barry K."/>
            <person name="Detter J.C."/>
            <person name="Glavina del Rio T."/>
            <person name="Hammon N."/>
            <person name="Israni S."/>
            <person name="Dalin E."/>
            <person name="Tice H."/>
            <person name="Pitluck S."/>
            <person name="Chain P."/>
            <person name="Malfatti S."/>
            <person name="Shin M."/>
            <person name="Vergez L."/>
            <person name="Schmutz J."/>
            <person name="Larimer F."/>
            <person name="Land M."/>
            <person name="Hauser L."/>
            <person name="Kyrpides N."/>
            <person name="Mikhailova N."/>
            <person name="Romine M.F."/>
            <person name="Serres G."/>
            <person name="Fredrickson J."/>
            <person name="Tiedje J."/>
            <person name="Richardson P."/>
        </authorList>
    </citation>
    <scope>NUCLEOTIDE SEQUENCE [LARGE SCALE GENOMIC DNA]</scope>
    <source>
        <strain>ATCC BAA-1088 / PV-4</strain>
    </source>
</reference>
<name>SLYX_SHELP</name>
<organism>
    <name type="scientific">Shewanella loihica (strain ATCC BAA-1088 / PV-4)</name>
    <dbReference type="NCBI Taxonomy" id="323850"/>
    <lineage>
        <taxon>Bacteria</taxon>
        <taxon>Pseudomonadati</taxon>
        <taxon>Pseudomonadota</taxon>
        <taxon>Gammaproteobacteria</taxon>
        <taxon>Alteromonadales</taxon>
        <taxon>Shewanellaceae</taxon>
        <taxon>Shewanella</taxon>
    </lineage>
</organism>
<sequence>MVQLEQRIEDLEMKLAFQDDTIESLNQQVIRLNDLLADQQEKLRLLTSKLSQVEPSNIASQAEETPPPHY</sequence>
<comment type="similarity">
    <text evidence="1">Belongs to the SlyX family.</text>
</comment>
<keyword id="KW-1185">Reference proteome</keyword>